<name>SPY3_HUMAN</name>
<feature type="chain" id="PRO_0000076904" description="Protein sprouty homolog 3">
    <location>
        <begin position="1"/>
        <end position="288"/>
    </location>
</feature>
<feature type="domain" description="SPR" evidence="2">
    <location>
        <begin position="154"/>
        <end position="260"/>
    </location>
</feature>
<feature type="sequence variant" id="VAR_034519" description="In dbSNP:rs35474915.">
    <original>A</original>
    <variation>T</variation>
    <location>
        <position position="161"/>
    </location>
</feature>
<feature type="sequence conflict" description="In Ref. 6; AAC39567." evidence="10" ref="6">
    <original>T</original>
    <variation>P</variation>
    <location>
        <position position="93"/>
    </location>
</feature>
<evidence type="ECO:0000250" key="1">
    <source>
        <dbReference type="UniProtKB" id="Q3UUD2"/>
    </source>
</evidence>
<evidence type="ECO:0000255" key="2">
    <source>
        <dbReference type="PROSITE-ProRule" id="PRU00572"/>
    </source>
</evidence>
<evidence type="ECO:0000269" key="3">
    <source>
    </source>
</evidence>
<evidence type="ECO:0000269" key="4">
    <source>
    </source>
</evidence>
<evidence type="ECO:0000269" key="5">
    <source>
    </source>
</evidence>
<evidence type="ECO:0000269" key="6">
    <source>
    </source>
</evidence>
<evidence type="ECO:0000269" key="7">
    <source>
    </source>
</evidence>
<evidence type="ECO:0000303" key="8">
    <source>
    </source>
</evidence>
<evidence type="ECO:0000305" key="9"/>
<evidence type="ECO:0000305" key="10">
    <source>
    </source>
</evidence>
<evidence type="ECO:0000312" key="11">
    <source>
        <dbReference type="HGNC" id="HGNC:11271"/>
    </source>
</evidence>
<gene>
    <name evidence="11" type="primary">SPRY3</name>
</gene>
<proteinExistence type="evidence at protein level"/>
<sequence>MDAAVTDDFQQILPIEQLRSTHASNDYVERPPAPCKQALSSPSLIVQTHKSDWSLATMPTSLPRSLSQCHQLQPLPQHLSQSSIASSMSHSTTASDQRLLASITPSPSGQSIIRTQPGAGVHPKADGALKGEAEQSAGHPSEHLFICEECGRCKCVPCTAARPLPSCWLCNQRCLCSAESLLDYGTCLCCVKGLFYHCSTDDEDNCADEPCSCGPSSCFVRWAAMSLISLFLPCLCCYLPTRGCLHLCQQGYDSLRRPGCRCKRHTNTVCRKISSGSAPFPKAQEKSV</sequence>
<comment type="function">
    <text evidence="1 6 7">Inhibits neurite branching, arbor length and neurite complexity (By similarity). Inhibits EGF-mediated p42/44 ERK signaling (By similarity). Negatively regulates the MAPK cascade, resulting in a reduction of extracellular matrix protein accumulation (PubMed:30878395). May function as an antagonist of fibroblast growth factor (FGF) pathways and may negatively modulate respiratory organogenesis (PubMed:9458049).</text>
</comment>
<comment type="subunit">
    <text evidence="1 3 5">Interacts with TESK1 (PubMed:17974561). Interacts with USP11 (PubMed:29293652). Interacts with CAV1 (via C-terminus) (By similarity).</text>
</comment>
<comment type="interaction">
    <interactant intactId="EBI-12290641">
        <id>O43610</id>
    </interactant>
    <interactant intactId="EBI-745213">
        <id>P29972</id>
        <label>AQP1</label>
    </interactant>
    <organismsDiffer>false</organismsDiffer>
    <experiments>3</experiments>
</comment>
<comment type="interaction">
    <interactant intactId="EBI-12290641">
        <id>O43610</id>
    </interactant>
    <interactant intactId="EBI-745073">
        <id>Q9BXY8</id>
        <label>BEX2</label>
    </interactant>
    <organismsDiffer>false</organismsDiffer>
    <experiments>3</experiments>
</comment>
<comment type="interaction">
    <interactant intactId="EBI-12290641">
        <id>O43610</id>
    </interactant>
    <interactant intactId="EBI-744545">
        <id>Q8NEC5</id>
        <label>CATSPER1</label>
    </interactant>
    <organismsDiffer>false</organismsDiffer>
    <experiments>3</experiments>
</comment>
<comment type="interaction">
    <interactant intactId="EBI-12290641">
        <id>O43610</id>
    </interactant>
    <interactant intactId="EBI-947551">
        <id>Q9H2X0</id>
        <label>CHRD</label>
    </interactant>
    <organismsDiffer>false</organismsDiffer>
    <experiments>3</experiments>
</comment>
<comment type="interaction">
    <interactant intactId="EBI-12290641">
        <id>O43610</id>
    </interactant>
    <interactant intactId="EBI-10192698">
        <id>Q02930-3</id>
        <label>CREB5</label>
    </interactant>
    <organismsDiffer>false</organismsDiffer>
    <experiments>3</experiments>
</comment>
<comment type="interaction">
    <interactant intactId="EBI-12290641">
        <id>O43610</id>
    </interactant>
    <interactant intactId="EBI-11975289">
        <id>Q9Y223-2</id>
        <label>GNE</label>
    </interactant>
    <organismsDiffer>false</organismsDiffer>
    <experiments>3</experiments>
</comment>
<comment type="interaction">
    <interactant intactId="EBI-12290641">
        <id>O43610</id>
    </interactant>
    <interactant intactId="EBI-347538">
        <id>Q9Y4H4</id>
        <label>GPSM3</label>
    </interactant>
    <organismsDiffer>false</organismsDiffer>
    <experiments>3</experiments>
</comment>
<comment type="interaction">
    <interactant intactId="EBI-12290641">
        <id>O43610</id>
    </interactant>
    <interactant intactId="EBI-740785">
        <id>P49639</id>
        <label>HOXA1</label>
    </interactant>
    <organismsDiffer>false</organismsDiffer>
    <experiments>3</experiments>
</comment>
<comment type="interaction">
    <interactant intactId="EBI-12290641">
        <id>O43610</id>
    </interactant>
    <interactant intactId="EBI-2880706">
        <id>O43593</id>
        <label>HR</label>
    </interactant>
    <organismsDiffer>false</organismsDiffer>
    <experiments>3</experiments>
</comment>
<comment type="interaction">
    <interactant intactId="EBI-12290641">
        <id>O43610</id>
    </interactant>
    <interactant intactId="EBI-10981970">
        <id>Q5T749</id>
        <label>KPRP</label>
    </interactant>
    <organismsDiffer>false</organismsDiffer>
    <experiments>3</experiments>
</comment>
<comment type="interaction">
    <interactant intactId="EBI-12290641">
        <id>O43610</id>
    </interactant>
    <interactant intactId="EBI-1047093">
        <id>O76011</id>
        <label>KRT34</label>
    </interactant>
    <organismsDiffer>false</organismsDiffer>
    <experiments>3</experiments>
</comment>
<comment type="interaction">
    <interactant intactId="EBI-12290641">
        <id>O43610</id>
    </interactant>
    <interactant intactId="EBI-11962058">
        <id>Q5T7P2</id>
        <label>LCE1A</label>
    </interactant>
    <organismsDiffer>false</organismsDiffer>
    <experiments>3</experiments>
</comment>
<comment type="interaction">
    <interactant intactId="EBI-12290641">
        <id>O43610</id>
    </interactant>
    <interactant intactId="EBI-10245913">
        <id>Q5T7P3</id>
        <label>LCE1B</label>
    </interactant>
    <organismsDiffer>false</organismsDiffer>
    <experiments>3</experiments>
</comment>
<comment type="interaction">
    <interactant intactId="EBI-12290641">
        <id>O43610</id>
    </interactant>
    <interactant intactId="EBI-11958008">
        <id>Q5T754</id>
        <label>LCE1F</label>
    </interactant>
    <organismsDiffer>false</organismsDiffer>
    <experiments>3</experiments>
</comment>
<comment type="interaction">
    <interactant intactId="EBI-12290641">
        <id>O43610</id>
    </interactant>
    <interactant intactId="EBI-11478468">
        <id>O14633</id>
        <label>LCE2B</label>
    </interactant>
    <organismsDiffer>false</organismsDiffer>
    <experiments>3</experiments>
</comment>
<comment type="interaction">
    <interactant intactId="EBI-12290641">
        <id>O43610</id>
    </interactant>
    <interactant intactId="EBI-9394625">
        <id>Q5TA76</id>
        <label>LCE3A</label>
    </interactant>
    <organismsDiffer>false</organismsDiffer>
    <experiments>3</experiments>
</comment>
<comment type="interaction">
    <interactant intactId="EBI-12290641">
        <id>O43610</id>
    </interactant>
    <interactant intactId="EBI-6658837">
        <id>Q9BYE3</id>
        <label>LCE3D</label>
    </interactant>
    <organismsDiffer>false</organismsDiffer>
    <experiments>3</experiments>
</comment>
<comment type="interaction">
    <interactant intactId="EBI-12290641">
        <id>O43610</id>
    </interactant>
    <interactant intactId="EBI-10245456">
        <id>Q5T5B0</id>
        <label>LCE3E</label>
    </interactant>
    <organismsDiffer>false</organismsDiffer>
    <experiments>3</experiments>
</comment>
<comment type="interaction">
    <interactant intactId="EBI-12290641">
        <id>O43610</id>
    </interactant>
    <interactant intactId="EBI-947402">
        <id>O60336</id>
        <label>MAPKBP1</label>
    </interactant>
    <organismsDiffer>false</organismsDiffer>
    <experiments>3</experiments>
</comment>
<comment type="interaction">
    <interactant intactId="EBI-12290641">
        <id>O43610</id>
    </interactant>
    <interactant intactId="EBI-16439278">
        <id>Q6FHY5</id>
        <label>MEOX2</label>
    </interactant>
    <organismsDiffer>false</organismsDiffer>
    <experiments>3</experiments>
</comment>
<comment type="interaction">
    <interactant intactId="EBI-12290641">
        <id>O43610</id>
    </interactant>
    <interactant intactId="EBI-11750983">
        <id>Q9HC98-4</id>
        <label>NEK6</label>
    </interactant>
    <organismsDiffer>false</organismsDiffer>
    <experiments>3</experiments>
</comment>
<comment type="interaction">
    <interactant intactId="EBI-12290641">
        <id>O43610</id>
    </interactant>
    <interactant intactId="EBI-948428">
        <id>Q9Y2K5</id>
        <label>R3HDM2</label>
    </interactant>
    <organismsDiffer>false</organismsDiffer>
    <experiments>3</experiments>
</comment>
<comment type="interaction">
    <interactant intactId="EBI-12290641">
        <id>O43610</id>
    </interactant>
    <interactant intactId="EBI-1051105">
        <id>Q92504</id>
        <label>SLC39A7</label>
    </interactant>
    <organismsDiffer>false</organismsDiffer>
    <experiments>3</experiments>
</comment>
<comment type="interaction">
    <interactant intactId="EBI-12290641">
        <id>O43610</id>
    </interactant>
    <interactant intactId="EBI-740943">
        <id>P62760</id>
        <label>VSNL1</label>
    </interactant>
    <organismsDiffer>false</organismsDiffer>
    <experiments>3</experiments>
</comment>
<comment type="interaction">
    <interactant intactId="EBI-12290641">
        <id>O43610</id>
    </interactant>
    <interactant intactId="EBI-524753">
        <id>Q8IUH5</id>
        <label>ZDHHC17</label>
    </interactant>
    <organismsDiffer>false</organismsDiffer>
    <experiments>3</experiments>
</comment>
<comment type="interaction">
    <interactant intactId="EBI-12290641">
        <id>O43610</id>
    </interactant>
    <interactant intactId="EBI-6427977">
        <id>Q96SQ5</id>
        <label>ZNF587</label>
    </interactant>
    <organismsDiffer>false</organismsDiffer>
    <experiments>3</experiments>
</comment>
<comment type="interaction">
    <interactant intactId="EBI-12290641">
        <id>O43610</id>
    </interactant>
    <interactant intactId="EBI-625509">
        <id>Q8N720</id>
        <label>ZNF655</label>
    </interactant>
    <organismsDiffer>false</organismsDiffer>
    <experiments>3</experiments>
</comment>
<comment type="subcellular location">
    <subcellularLocation>
        <location>Cytoplasm</location>
    </subcellularLocation>
</comment>
<comment type="tissue specificity">
    <text evidence="4 6">Widely expressed; particularly in the fetal tissues. Expressed in the brain with expression the highest in Purkinje cells in the cerebellum (at protein level) (PubMed:26089202). Expressed in the myocardium of the heart (PubMed:30878395).</text>
</comment>
<comment type="induction">
    <text evidence="6 7">By FGF signaling (PubMed:9458049). Repressed by microRNA-143-3P, which results in activation of MAPK signaling and promotion of excess accumulation of extracellular matrix. May thereby play a role in myocardial fibrosis (PubMed:30878395).</text>
</comment>
<comment type="miscellaneous">
    <text>The gene coding for this protein is located in the pseudoautosomal region 2 (PAR2) of X and Y chromosomes.</text>
</comment>
<comment type="similarity">
    <text evidence="9">Belongs to the sprouty family.</text>
</comment>
<comment type="sequence caution" evidence="9">
    <conflict type="frameshift">
        <sequence resource="EMBL-CDS" id="AAC39567"/>
    </conflict>
</comment>
<reference key="1">
    <citation type="journal article" date="2000" name="Hum. Mol. Genet.">
        <title>Differentially regulated and evolved genes in the fully sequenced Xq/Yq pseudoautosomal region.</title>
        <authorList>
            <person name="Ciccodicola A."/>
            <person name="D'Esposito M."/>
            <person name="Esposito T."/>
            <person name="Gianfrancesco F."/>
            <person name="Migliaccio C."/>
            <person name="Miano M.G."/>
            <person name="Matarazzo M.R."/>
            <person name="Vacca M."/>
            <person name="Franze A."/>
            <person name="Cuccurese M."/>
            <person name="Cocchia M."/>
            <person name="Curci A."/>
            <person name="Terracciano A."/>
            <person name="Torino A."/>
            <person name="Cocchia S."/>
            <person name="Mercadante G."/>
            <person name="Pannone E."/>
            <person name="Archidiacono N."/>
            <person name="Rocchi M."/>
            <person name="Schlessinger D."/>
            <person name="D'Urso M."/>
        </authorList>
    </citation>
    <scope>NUCLEOTIDE SEQUENCE [GENOMIC DNA]</scope>
</reference>
<reference key="2">
    <citation type="journal article" date="2004" name="Nat. Genet.">
        <title>Complete sequencing and characterization of 21,243 full-length human cDNAs.</title>
        <authorList>
            <person name="Ota T."/>
            <person name="Suzuki Y."/>
            <person name="Nishikawa T."/>
            <person name="Otsuki T."/>
            <person name="Sugiyama T."/>
            <person name="Irie R."/>
            <person name="Wakamatsu A."/>
            <person name="Hayashi K."/>
            <person name="Sato H."/>
            <person name="Nagai K."/>
            <person name="Kimura K."/>
            <person name="Makita H."/>
            <person name="Sekine M."/>
            <person name="Obayashi M."/>
            <person name="Nishi T."/>
            <person name="Shibahara T."/>
            <person name="Tanaka T."/>
            <person name="Ishii S."/>
            <person name="Yamamoto J."/>
            <person name="Saito K."/>
            <person name="Kawai Y."/>
            <person name="Isono Y."/>
            <person name="Nakamura Y."/>
            <person name="Nagahari K."/>
            <person name="Murakami K."/>
            <person name="Yasuda T."/>
            <person name="Iwayanagi T."/>
            <person name="Wagatsuma M."/>
            <person name="Shiratori A."/>
            <person name="Sudo H."/>
            <person name="Hosoiri T."/>
            <person name="Kaku Y."/>
            <person name="Kodaira H."/>
            <person name="Kondo H."/>
            <person name="Sugawara M."/>
            <person name="Takahashi M."/>
            <person name="Kanda K."/>
            <person name="Yokoi T."/>
            <person name="Furuya T."/>
            <person name="Kikkawa E."/>
            <person name="Omura Y."/>
            <person name="Abe K."/>
            <person name="Kamihara K."/>
            <person name="Katsuta N."/>
            <person name="Sato K."/>
            <person name="Tanikawa M."/>
            <person name="Yamazaki M."/>
            <person name="Ninomiya K."/>
            <person name="Ishibashi T."/>
            <person name="Yamashita H."/>
            <person name="Murakawa K."/>
            <person name="Fujimori K."/>
            <person name="Tanai H."/>
            <person name="Kimata M."/>
            <person name="Watanabe M."/>
            <person name="Hiraoka S."/>
            <person name="Chiba Y."/>
            <person name="Ishida S."/>
            <person name="Ono Y."/>
            <person name="Takiguchi S."/>
            <person name="Watanabe S."/>
            <person name="Yosida M."/>
            <person name="Hotuta T."/>
            <person name="Kusano J."/>
            <person name="Kanehori K."/>
            <person name="Takahashi-Fujii A."/>
            <person name="Hara H."/>
            <person name="Tanase T.-O."/>
            <person name="Nomura Y."/>
            <person name="Togiya S."/>
            <person name="Komai F."/>
            <person name="Hara R."/>
            <person name="Takeuchi K."/>
            <person name="Arita M."/>
            <person name="Imose N."/>
            <person name="Musashino K."/>
            <person name="Yuuki H."/>
            <person name="Oshima A."/>
            <person name="Sasaki N."/>
            <person name="Aotsuka S."/>
            <person name="Yoshikawa Y."/>
            <person name="Matsunawa H."/>
            <person name="Ichihara T."/>
            <person name="Shiohata N."/>
            <person name="Sano S."/>
            <person name="Moriya S."/>
            <person name="Momiyama H."/>
            <person name="Satoh N."/>
            <person name="Takami S."/>
            <person name="Terashima Y."/>
            <person name="Suzuki O."/>
            <person name="Nakagawa S."/>
            <person name="Senoh A."/>
            <person name="Mizoguchi H."/>
            <person name="Goto Y."/>
            <person name="Shimizu F."/>
            <person name="Wakebe H."/>
            <person name="Hishigaki H."/>
            <person name="Watanabe T."/>
            <person name="Sugiyama A."/>
            <person name="Takemoto M."/>
            <person name="Kawakami B."/>
            <person name="Yamazaki M."/>
            <person name="Watanabe K."/>
            <person name="Kumagai A."/>
            <person name="Itakura S."/>
            <person name="Fukuzumi Y."/>
            <person name="Fujimori Y."/>
            <person name="Komiyama M."/>
            <person name="Tashiro H."/>
            <person name="Tanigami A."/>
            <person name="Fujiwara T."/>
            <person name="Ono T."/>
            <person name="Yamada K."/>
            <person name="Fujii Y."/>
            <person name="Ozaki K."/>
            <person name="Hirao M."/>
            <person name="Ohmori Y."/>
            <person name="Kawabata A."/>
            <person name="Hikiji T."/>
            <person name="Kobatake N."/>
            <person name="Inagaki H."/>
            <person name="Ikema Y."/>
            <person name="Okamoto S."/>
            <person name="Okitani R."/>
            <person name="Kawakami T."/>
            <person name="Noguchi S."/>
            <person name="Itoh T."/>
            <person name="Shigeta K."/>
            <person name="Senba T."/>
            <person name="Matsumura K."/>
            <person name="Nakajima Y."/>
            <person name="Mizuno T."/>
            <person name="Morinaga M."/>
            <person name="Sasaki M."/>
            <person name="Togashi T."/>
            <person name="Oyama M."/>
            <person name="Hata H."/>
            <person name="Watanabe M."/>
            <person name="Komatsu T."/>
            <person name="Mizushima-Sugano J."/>
            <person name="Satoh T."/>
            <person name="Shirai Y."/>
            <person name="Takahashi Y."/>
            <person name="Nakagawa K."/>
            <person name="Okumura K."/>
            <person name="Nagase T."/>
            <person name="Nomura N."/>
            <person name="Kikuchi H."/>
            <person name="Masuho Y."/>
            <person name="Yamashita R."/>
            <person name="Nakai K."/>
            <person name="Yada T."/>
            <person name="Nakamura Y."/>
            <person name="Ohara O."/>
            <person name="Isogai T."/>
            <person name="Sugano S."/>
        </authorList>
    </citation>
    <scope>NUCLEOTIDE SEQUENCE [LARGE SCALE MRNA]</scope>
    <source>
        <tissue>Cerebellum</tissue>
    </source>
</reference>
<reference key="3">
    <citation type="journal article" date="2005" name="Nature">
        <title>The DNA sequence of the human X chromosome.</title>
        <authorList>
            <person name="Ross M.T."/>
            <person name="Grafham D.V."/>
            <person name="Coffey A.J."/>
            <person name="Scherer S."/>
            <person name="McLay K."/>
            <person name="Muzny D."/>
            <person name="Platzer M."/>
            <person name="Howell G.R."/>
            <person name="Burrows C."/>
            <person name="Bird C.P."/>
            <person name="Frankish A."/>
            <person name="Lovell F.L."/>
            <person name="Howe K.L."/>
            <person name="Ashurst J.L."/>
            <person name="Fulton R.S."/>
            <person name="Sudbrak R."/>
            <person name="Wen G."/>
            <person name="Jones M.C."/>
            <person name="Hurles M.E."/>
            <person name="Andrews T.D."/>
            <person name="Scott C.E."/>
            <person name="Searle S."/>
            <person name="Ramser J."/>
            <person name="Whittaker A."/>
            <person name="Deadman R."/>
            <person name="Carter N.P."/>
            <person name="Hunt S.E."/>
            <person name="Chen R."/>
            <person name="Cree A."/>
            <person name="Gunaratne P."/>
            <person name="Havlak P."/>
            <person name="Hodgson A."/>
            <person name="Metzker M.L."/>
            <person name="Richards S."/>
            <person name="Scott G."/>
            <person name="Steffen D."/>
            <person name="Sodergren E."/>
            <person name="Wheeler D.A."/>
            <person name="Worley K.C."/>
            <person name="Ainscough R."/>
            <person name="Ambrose K.D."/>
            <person name="Ansari-Lari M.A."/>
            <person name="Aradhya S."/>
            <person name="Ashwell R.I."/>
            <person name="Babbage A.K."/>
            <person name="Bagguley C.L."/>
            <person name="Ballabio A."/>
            <person name="Banerjee R."/>
            <person name="Barker G.E."/>
            <person name="Barlow K.F."/>
            <person name="Barrett I.P."/>
            <person name="Bates K.N."/>
            <person name="Beare D.M."/>
            <person name="Beasley H."/>
            <person name="Beasley O."/>
            <person name="Beck A."/>
            <person name="Bethel G."/>
            <person name="Blechschmidt K."/>
            <person name="Brady N."/>
            <person name="Bray-Allen S."/>
            <person name="Bridgeman A.M."/>
            <person name="Brown A.J."/>
            <person name="Brown M.J."/>
            <person name="Bonnin D."/>
            <person name="Bruford E.A."/>
            <person name="Buhay C."/>
            <person name="Burch P."/>
            <person name="Burford D."/>
            <person name="Burgess J."/>
            <person name="Burrill W."/>
            <person name="Burton J."/>
            <person name="Bye J.M."/>
            <person name="Carder C."/>
            <person name="Carrel L."/>
            <person name="Chako J."/>
            <person name="Chapman J.C."/>
            <person name="Chavez D."/>
            <person name="Chen E."/>
            <person name="Chen G."/>
            <person name="Chen Y."/>
            <person name="Chen Z."/>
            <person name="Chinault C."/>
            <person name="Ciccodicola A."/>
            <person name="Clark S.Y."/>
            <person name="Clarke G."/>
            <person name="Clee C.M."/>
            <person name="Clegg S."/>
            <person name="Clerc-Blankenburg K."/>
            <person name="Clifford K."/>
            <person name="Cobley V."/>
            <person name="Cole C.G."/>
            <person name="Conquer J.S."/>
            <person name="Corby N."/>
            <person name="Connor R.E."/>
            <person name="David R."/>
            <person name="Davies J."/>
            <person name="Davis C."/>
            <person name="Davis J."/>
            <person name="Delgado O."/>
            <person name="Deshazo D."/>
            <person name="Dhami P."/>
            <person name="Ding Y."/>
            <person name="Dinh H."/>
            <person name="Dodsworth S."/>
            <person name="Draper H."/>
            <person name="Dugan-Rocha S."/>
            <person name="Dunham A."/>
            <person name="Dunn M."/>
            <person name="Durbin K.J."/>
            <person name="Dutta I."/>
            <person name="Eades T."/>
            <person name="Ellwood M."/>
            <person name="Emery-Cohen A."/>
            <person name="Errington H."/>
            <person name="Evans K.L."/>
            <person name="Faulkner L."/>
            <person name="Francis F."/>
            <person name="Frankland J."/>
            <person name="Fraser A.E."/>
            <person name="Galgoczy P."/>
            <person name="Gilbert J."/>
            <person name="Gill R."/>
            <person name="Gloeckner G."/>
            <person name="Gregory S.G."/>
            <person name="Gribble S."/>
            <person name="Griffiths C."/>
            <person name="Grocock R."/>
            <person name="Gu Y."/>
            <person name="Gwilliam R."/>
            <person name="Hamilton C."/>
            <person name="Hart E.A."/>
            <person name="Hawes A."/>
            <person name="Heath P.D."/>
            <person name="Heitmann K."/>
            <person name="Hennig S."/>
            <person name="Hernandez J."/>
            <person name="Hinzmann B."/>
            <person name="Ho S."/>
            <person name="Hoffs M."/>
            <person name="Howden P.J."/>
            <person name="Huckle E.J."/>
            <person name="Hume J."/>
            <person name="Hunt P.J."/>
            <person name="Hunt A.R."/>
            <person name="Isherwood J."/>
            <person name="Jacob L."/>
            <person name="Johnson D."/>
            <person name="Jones S."/>
            <person name="de Jong P.J."/>
            <person name="Joseph S.S."/>
            <person name="Keenan S."/>
            <person name="Kelly S."/>
            <person name="Kershaw J.K."/>
            <person name="Khan Z."/>
            <person name="Kioschis P."/>
            <person name="Klages S."/>
            <person name="Knights A.J."/>
            <person name="Kosiura A."/>
            <person name="Kovar-Smith C."/>
            <person name="Laird G.K."/>
            <person name="Langford C."/>
            <person name="Lawlor S."/>
            <person name="Leversha M."/>
            <person name="Lewis L."/>
            <person name="Liu W."/>
            <person name="Lloyd C."/>
            <person name="Lloyd D.M."/>
            <person name="Loulseged H."/>
            <person name="Loveland J.E."/>
            <person name="Lovell J.D."/>
            <person name="Lozado R."/>
            <person name="Lu J."/>
            <person name="Lyne R."/>
            <person name="Ma J."/>
            <person name="Maheshwari M."/>
            <person name="Matthews L.H."/>
            <person name="McDowall J."/>
            <person name="McLaren S."/>
            <person name="McMurray A."/>
            <person name="Meidl P."/>
            <person name="Meitinger T."/>
            <person name="Milne S."/>
            <person name="Miner G."/>
            <person name="Mistry S.L."/>
            <person name="Morgan M."/>
            <person name="Morris S."/>
            <person name="Mueller I."/>
            <person name="Mullikin J.C."/>
            <person name="Nguyen N."/>
            <person name="Nordsiek G."/>
            <person name="Nyakatura G."/>
            <person name="O'dell C.N."/>
            <person name="Okwuonu G."/>
            <person name="Palmer S."/>
            <person name="Pandian R."/>
            <person name="Parker D."/>
            <person name="Parrish J."/>
            <person name="Pasternak S."/>
            <person name="Patel D."/>
            <person name="Pearce A.V."/>
            <person name="Pearson D.M."/>
            <person name="Pelan S.E."/>
            <person name="Perez L."/>
            <person name="Porter K.M."/>
            <person name="Ramsey Y."/>
            <person name="Reichwald K."/>
            <person name="Rhodes S."/>
            <person name="Ridler K.A."/>
            <person name="Schlessinger D."/>
            <person name="Schueler M.G."/>
            <person name="Sehra H.K."/>
            <person name="Shaw-Smith C."/>
            <person name="Shen H."/>
            <person name="Sheridan E.M."/>
            <person name="Shownkeen R."/>
            <person name="Skuce C.D."/>
            <person name="Smith M.L."/>
            <person name="Sotheran E.C."/>
            <person name="Steingruber H.E."/>
            <person name="Steward C.A."/>
            <person name="Storey R."/>
            <person name="Swann R.M."/>
            <person name="Swarbreck D."/>
            <person name="Tabor P.E."/>
            <person name="Taudien S."/>
            <person name="Taylor T."/>
            <person name="Teague B."/>
            <person name="Thomas K."/>
            <person name="Thorpe A."/>
            <person name="Timms K."/>
            <person name="Tracey A."/>
            <person name="Trevanion S."/>
            <person name="Tromans A.C."/>
            <person name="d'Urso M."/>
            <person name="Verduzco D."/>
            <person name="Villasana D."/>
            <person name="Waldron L."/>
            <person name="Wall M."/>
            <person name="Wang Q."/>
            <person name="Warren J."/>
            <person name="Warry G.L."/>
            <person name="Wei X."/>
            <person name="West A."/>
            <person name="Whitehead S.L."/>
            <person name="Whiteley M.N."/>
            <person name="Wilkinson J.E."/>
            <person name="Willey D.L."/>
            <person name="Williams G."/>
            <person name="Williams L."/>
            <person name="Williamson A."/>
            <person name="Williamson H."/>
            <person name="Wilming L."/>
            <person name="Woodmansey R.L."/>
            <person name="Wray P.W."/>
            <person name="Yen J."/>
            <person name="Zhang J."/>
            <person name="Zhou J."/>
            <person name="Zoghbi H."/>
            <person name="Zorilla S."/>
            <person name="Buck D."/>
            <person name="Reinhardt R."/>
            <person name="Poustka A."/>
            <person name="Rosenthal A."/>
            <person name="Lehrach H."/>
            <person name="Meindl A."/>
            <person name="Minx P.J."/>
            <person name="Hillier L.W."/>
            <person name="Willard H.F."/>
            <person name="Wilson R.K."/>
            <person name="Waterston R.H."/>
            <person name="Rice C.M."/>
            <person name="Vaudin M."/>
            <person name="Coulson A."/>
            <person name="Nelson D.L."/>
            <person name="Weinstock G."/>
            <person name="Sulston J.E."/>
            <person name="Durbin R.M."/>
            <person name="Hubbard T."/>
            <person name="Gibbs R.A."/>
            <person name="Beck S."/>
            <person name="Rogers J."/>
            <person name="Bentley D.R."/>
        </authorList>
    </citation>
    <scope>NUCLEOTIDE SEQUENCE [LARGE SCALE GENOMIC DNA]</scope>
</reference>
<reference key="4">
    <citation type="submission" date="2005-07" db="EMBL/GenBank/DDBJ databases">
        <authorList>
            <person name="Mural R.J."/>
            <person name="Istrail S."/>
            <person name="Sutton G.G."/>
            <person name="Florea L."/>
            <person name="Halpern A.L."/>
            <person name="Mobarry C.M."/>
            <person name="Lippert R."/>
            <person name="Walenz B."/>
            <person name="Shatkay H."/>
            <person name="Dew I."/>
            <person name="Miller J.R."/>
            <person name="Flanigan M.J."/>
            <person name="Edwards N.J."/>
            <person name="Bolanos R."/>
            <person name="Fasulo D."/>
            <person name="Halldorsson B.V."/>
            <person name="Hannenhalli S."/>
            <person name="Turner R."/>
            <person name="Yooseph S."/>
            <person name="Lu F."/>
            <person name="Nusskern D.R."/>
            <person name="Shue B.C."/>
            <person name="Zheng X.H."/>
            <person name="Zhong F."/>
            <person name="Delcher A.L."/>
            <person name="Huson D.H."/>
            <person name="Kravitz S.A."/>
            <person name="Mouchard L."/>
            <person name="Reinert K."/>
            <person name="Remington K.A."/>
            <person name="Clark A.G."/>
            <person name="Waterman M.S."/>
            <person name="Eichler E.E."/>
            <person name="Adams M.D."/>
            <person name="Hunkapiller M.W."/>
            <person name="Myers E.W."/>
            <person name="Venter J.C."/>
        </authorList>
    </citation>
    <scope>NUCLEOTIDE SEQUENCE [LARGE SCALE GENOMIC DNA]</scope>
</reference>
<reference key="5">
    <citation type="journal article" date="2004" name="Genome Res.">
        <title>The status, quality, and expansion of the NIH full-length cDNA project: the Mammalian Gene Collection (MGC).</title>
        <authorList>
            <consortium name="The MGC Project Team"/>
        </authorList>
    </citation>
    <scope>NUCLEOTIDE SEQUENCE [LARGE SCALE MRNA]</scope>
</reference>
<reference key="6">
    <citation type="journal article" date="1998" name="Cell">
        <title>Sprouty encodes a novel antagonist of FGF signaling that patterns apical branching of the Drosophila airways.</title>
        <authorList>
            <person name="Hacohen N."/>
            <person name="Kramer S."/>
            <person name="Sutherland D."/>
            <person name="Hiromi Y."/>
            <person name="Krasnow M.A."/>
        </authorList>
    </citation>
    <scope>NUCLEOTIDE SEQUENCE [MRNA] OF 93-191</scope>
    <scope>FUNCTION</scope>
    <scope>INDUCTION BY FGF SIGNALING</scope>
</reference>
<reference key="7">
    <citation type="journal article" date="2008" name="J. Biol. Chem.">
        <title>Tesk1 interacts with Spry2 to abrogate its inhibition of ERK phosphorylation downstream of receptor tyrosine kinase signaling.</title>
        <authorList>
            <person name="Chandramouli S."/>
            <person name="Yu C.Y."/>
            <person name="Yusoff P."/>
            <person name="Lao D.H."/>
            <person name="Leong H.F."/>
            <person name="Mizuno K."/>
            <person name="Guy G.R."/>
        </authorList>
    </citation>
    <scope>INTERACTION WITH TESK1</scope>
</reference>
<reference key="8">
    <citation type="journal article" date="2015" name="Hum. Mol. Genet.">
        <title>Regulation of SPRY3 by X chromosome and PAR2-linked promoters in an autism susceptibility region.</title>
        <authorList>
            <person name="Ning Z."/>
            <person name="McLellan A.S."/>
            <person name="Ball M."/>
            <person name="Wynne F."/>
            <person name="O'Neill C."/>
            <person name="Mills W."/>
            <person name="Quinn J.P."/>
            <person name="Kleinjan D.A."/>
            <person name="Anney R.J."/>
            <person name="Carmody R.J."/>
            <person name="O'Keeffe G."/>
            <person name="Moore T."/>
        </authorList>
    </citation>
    <scope>TISSUE SPECIFICITY</scope>
</reference>
<reference key="9">
    <citation type="journal article" date="2018" name="PLoS ONE">
        <title>USP11 deubiquitinates RAE1 and plays a key role in bipolar spindle formation.</title>
        <authorList>
            <person name="Stockum A."/>
            <person name="Snijders A.P."/>
            <person name="Maertens G.N."/>
        </authorList>
    </citation>
    <scope>INTERACTION WITH USP11</scope>
</reference>
<reference key="10">
    <citation type="journal article" date="2019" name="J. Mol. Cell. Cardiol.">
        <title>MicroRNA-143-3p promotes human cardiac fibrosis via targeting sprouty3 after myocardial infarction.</title>
        <authorList>
            <person name="Li C."/>
            <person name="Li J."/>
            <person name="Xue K."/>
            <person name="Zhang J."/>
            <person name="Wang C."/>
            <person name="Zhang Q."/>
            <person name="Chen X."/>
            <person name="Gao C."/>
            <person name="Yu X."/>
            <person name="Sun L."/>
        </authorList>
    </citation>
    <scope>FUNCTION</scope>
    <scope>TISSUE SPECIFICITY</scope>
    <scope>INDUCTION BY MICRORNA-143-3P</scope>
</reference>
<accession>O43610</accession>
<accession>A8K0H8</accession>
<dbReference type="EMBL" id="AJ271735">
    <property type="protein sequence ID" value="CAB96768.1"/>
    <property type="molecule type" value="Genomic_DNA"/>
</dbReference>
<dbReference type="EMBL" id="AK289543">
    <property type="protein sequence ID" value="BAF82232.1"/>
    <property type="molecule type" value="mRNA"/>
</dbReference>
<dbReference type="EMBL" id="CH471247">
    <property type="protein sequence ID" value="EAW55876.1"/>
    <property type="molecule type" value="Genomic_DNA"/>
</dbReference>
<dbReference type="EMBL" id="BC069609">
    <property type="protein sequence ID" value="AAH69609.1"/>
    <property type="molecule type" value="mRNA"/>
</dbReference>
<dbReference type="EMBL" id="BC074972">
    <property type="protein sequence ID" value="AAH74972.1"/>
    <property type="molecule type" value="mRNA"/>
</dbReference>
<dbReference type="EMBL" id="BC074973">
    <property type="protein sequence ID" value="AAH74973.1"/>
    <property type="molecule type" value="mRNA"/>
</dbReference>
<dbReference type="EMBL" id="AF041038">
    <property type="protein sequence ID" value="AAC39567.1"/>
    <property type="status" value="ALT_FRAME"/>
    <property type="molecule type" value="mRNA"/>
</dbReference>
<dbReference type="CCDS" id="CCDS14769.4"/>
<dbReference type="RefSeq" id="NP_001291919.1">
    <property type="nucleotide sequence ID" value="NM_001304990.2"/>
</dbReference>
<dbReference type="RefSeq" id="NP_001381282.1">
    <property type="nucleotide sequence ID" value="NM_001394353.1"/>
</dbReference>
<dbReference type="RefSeq" id="NP_001381283.1">
    <property type="nucleotide sequence ID" value="NM_001394354.1"/>
</dbReference>
<dbReference type="RefSeq" id="NP_001381284.1">
    <property type="nucleotide sequence ID" value="NM_001394355.1"/>
</dbReference>
<dbReference type="RefSeq" id="NP_005831.1">
    <property type="nucleotide sequence ID" value="NM_005840.4"/>
</dbReference>
<dbReference type="BioGRID" id="115545">
    <property type="interactions" value="29"/>
</dbReference>
<dbReference type="FunCoup" id="O43610">
    <property type="interactions" value="464"/>
</dbReference>
<dbReference type="IntAct" id="O43610">
    <property type="interactions" value="27"/>
</dbReference>
<dbReference type="STRING" id="9606.ENSP00000302978"/>
<dbReference type="iPTMnet" id="O43610"/>
<dbReference type="PhosphoSitePlus" id="O43610"/>
<dbReference type="BioMuta" id="SPRY3"/>
<dbReference type="jPOST" id="O43610"/>
<dbReference type="MassIVE" id="O43610"/>
<dbReference type="PaxDb" id="9606-ENSP00000302978"/>
<dbReference type="PeptideAtlas" id="O43610"/>
<dbReference type="ProteomicsDB" id="49079"/>
<dbReference type="Antibodypedia" id="31439">
    <property type="antibodies" value="106 antibodies from 21 providers"/>
</dbReference>
<dbReference type="DNASU" id="10251"/>
<dbReference type="Ensembl" id="ENST00000302805.7">
    <property type="protein sequence ID" value="ENSP00000302978.2"/>
    <property type="gene ID" value="ENSG00000168939.13"/>
</dbReference>
<dbReference type="Ensembl" id="ENST00000675360.1">
    <property type="protein sequence ID" value="ENSP00000502489.1"/>
    <property type="gene ID" value="ENSG00000168939.13"/>
</dbReference>
<dbReference type="Ensembl" id="ENST00000695325.1">
    <property type="protein sequence ID" value="ENSP00000511806.1"/>
    <property type="gene ID" value="ENSG00000168939.13"/>
</dbReference>
<dbReference type="GeneID" id="10251"/>
<dbReference type="KEGG" id="hsa:10251"/>
<dbReference type="MANE-Select" id="ENST00000695325.1">
    <property type="protein sequence ID" value="ENSP00000511806.1"/>
    <property type="RefSeq nucleotide sequence ID" value="NM_001304990.2"/>
    <property type="RefSeq protein sequence ID" value="NP_001291919.1"/>
</dbReference>
<dbReference type="UCSC" id="uc004fnq.2">
    <property type="organism name" value="human"/>
</dbReference>
<dbReference type="AGR" id="HGNC:11271"/>
<dbReference type="CTD" id="10251"/>
<dbReference type="DisGeNET" id="10251"/>
<dbReference type="GeneCards" id="SPRY3"/>
<dbReference type="HGNC" id="HGNC:11271">
    <property type="gene designation" value="SPRY3"/>
</dbReference>
<dbReference type="HPA" id="ENSG00000168939">
    <property type="expression patterns" value="Low tissue specificity"/>
</dbReference>
<dbReference type="MIM" id="300531">
    <property type="type" value="gene"/>
</dbReference>
<dbReference type="neXtProt" id="NX_O43610"/>
<dbReference type="OpenTargets" id="ENSG00000168939"/>
<dbReference type="PharmGKB" id="PA36100"/>
<dbReference type="VEuPathDB" id="HostDB:ENSG00000168939"/>
<dbReference type="eggNOG" id="ENOG502R5TY">
    <property type="taxonomic scope" value="Eukaryota"/>
</dbReference>
<dbReference type="GeneTree" id="ENSGT00950000183055"/>
<dbReference type="HOGENOM" id="CLU_077696_1_0_1"/>
<dbReference type="InParanoid" id="O43610"/>
<dbReference type="OMA" id="CQNHTNT"/>
<dbReference type="OrthoDB" id="10038884at2759"/>
<dbReference type="PAN-GO" id="O43610">
    <property type="GO annotations" value="5 GO annotations based on evolutionary models"/>
</dbReference>
<dbReference type="PhylomeDB" id="O43610"/>
<dbReference type="TreeFam" id="TF325070"/>
<dbReference type="PathwayCommons" id="O43610"/>
<dbReference type="SignaLink" id="O43610"/>
<dbReference type="BioGRID-ORCS" id="10251">
    <property type="hits" value="9 hits in 604 CRISPR screens"/>
</dbReference>
<dbReference type="ChiTaRS" id="SPRY3">
    <property type="organism name" value="human"/>
</dbReference>
<dbReference type="GeneWiki" id="SPRY3"/>
<dbReference type="GenomeRNAi" id="10251"/>
<dbReference type="Pharos" id="O43610">
    <property type="development level" value="Tbio"/>
</dbReference>
<dbReference type="PRO" id="PR:O43610"/>
<dbReference type="Proteomes" id="UP000005640">
    <property type="component" value="Chromosome X"/>
</dbReference>
<dbReference type="RNAct" id="O43610">
    <property type="molecule type" value="protein"/>
</dbReference>
<dbReference type="Bgee" id="ENSG00000168939">
    <property type="expression patterns" value="Expressed in male germ line stem cell (sensu Vertebrata) in testis and 98 other cell types or tissues"/>
</dbReference>
<dbReference type="GO" id="GO:0005829">
    <property type="term" value="C:cytosol"/>
    <property type="evidence" value="ECO:0000318"/>
    <property type="project" value="GO_Central"/>
</dbReference>
<dbReference type="GO" id="GO:0016020">
    <property type="term" value="C:membrane"/>
    <property type="evidence" value="ECO:0007669"/>
    <property type="project" value="InterPro"/>
</dbReference>
<dbReference type="GO" id="GO:0048513">
    <property type="term" value="P:animal organ development"/>
    <property type="evidence" value="ECO:0000318"/>
    <property type="project" value="GO_Central"/>
</dbReference>
<dbReference type="GO" id="GO:0070373">
    <property type="term" value="P:negative regulation of ERK1 and ERK2 cascade"/>
    <property type="evidence" value="ECO:0000250"/>
    <property type="project" value="UniProtKB"/>
</dbReference>
<dbReference type="GO" id="GO:0040037">
    <property type="term" value="P:negative regulation of fibroblast growth factor receptor signaling pathway"/>
    <property type="evidence" value="ECO:0000318"/>
    <property type="project" value="GO_Central"/>
</dbReference>
<dbReference type="GO" id="GO:0043409">
    <property type="term" value="P:negative regulation of MAPK cascade"/>
    <property type="evidence" value="ECO:0000315"/>
    <property type="project" value="UniProtKB"/>
</dbReference>
<dbReference type="GO" id="GO:0150013">
    <property type="term" value="P:negative regulation of neuron projection arborization"/>
    <property type="evidence" value="ECO:0000250"/>
    <property type="project" value="UniProtKB"/>
</dbReference>
<dbReference type="GO" id="GO:0046580">
    <property type="term" value="P:negative regulation of Ras protein signal transduction"/>
    <property type="evidence" value="ECO:0000318"/>
    <property type="project" value="GO_Central"/>
</dbReference>
<dbReference type="GO" id="GO:0007399">
    <property type="term" value="P:nervous system development"/>
    <property type="evidence" value="ECO:0007669"/>
    <property type="project" value="UniProtKB-KW"/>
</dbReference>
<dbReference type="InterPro" id="IPR007875">
    <property type="entry name" value="Sprouty"/>
</dbReference>
<dbReference type="InterPro" id="IPR051192">
    <property type="entry name" value="Sprouty_domain"/>
</dbReference>
<dbReference type="PANTHER" id="PTHR12365:SF9">
    <property type="entry name" value="PROTEIN SPROUTY HOMOLOG 3"/>
    <property type="match status" value="1"/>
</dbReference>
<dbReference type="PANTHER" id="PTHR12365">
    <property type="entry name" value="SPROUTY"/>
    <property type="match status" value="1"/>
</dbReference>
<dbReference type="Pfam" id="PF05210">
    <property type="entry name" value="Sprouty"/>
    <property type="match status" value="1"/>
</dbReference>
<dbReference type="PROSITE" id="PS51227">
    <property type="entry name" value="SPR"/>
    <property type="match status" value="1"/>
</dbReference>
<keyword id="KW-0963">Cytoplasm</keyword>
<keyword id="KW-0524">Neurogenesis</keyword>
<keyword id="KW-1267">Proteomics identification</keyword>
<keyword id="KW-1185">Reference proteome</keyword>
<organism>
    <name type="scientific">Homo sapiens</name>
    <name type="common">Human</name>
    <dbReference type="NCBI Taxonomy" id="9606"/>
    <lineage>
        <taxon>Eukaryota</taxon>
        <taxon>Metazoa</taxon>
        <taxon>Chordata</taxon>
        <taxon>Craniata</taxon>
        <taxon>Vertebrata</taxon>
        <taxon>Euteleostomi</taxon>
        <taxon>Mammalia</taxon>
        <taxon>Eutheria</taxon>
        <taxon>Euarchontoglires</taxon>
        <taxon>Primates</taxon>
        <taxon>Haplorrhini</taxon>
        <taxon>Catarrhini</taxon>
        <taxon>Hominidae</taxon>
        <taxon>Homo</taxon>
    </lineage>
</organism>
<protein>
    <recommendedName>
        <fullName evidence="9">Protein sprouty homolog 3</fullName>
        <shortName evidence="9">Spry-3</shortName>
    </recommendedName>
    <alternativeName>
        <fullName evidence="11">Sprouty RTK signaling antagonist 3</fullName>
    </alternativeName>
    <alternativeName>
        <fullName evidence="8">Sprouty3</fullName>
    </alternativeName>
</protein>